<evidence type="ECO:0000255" key="1"/>
<evidence type="ECO:0000305" key="2"/>
<name>LHB1_RHOTE</name>
<keyword id="KW-0042">Antenna complex</keyword>
<keyword id="KW-0076">Bacteriochlorophyll</keyword>
<keyword id="KW-0997">Cell inner membrane</keyword>
<keyword id="KW-1003">Cell membrane</keyword>
<keyword id="KW-0148">Chlorophyll</keyword>
<keyword id="KW-0157">Chromophore</keyword>
<keyword id="KW-0903">Direct protein sequencing</keyword>
<keyword id="KW-0437">Light-harvesting polypeptide</keyword>
<keyword id="KW-0460">Magnesium</keyword>
<keyword id="KW-0472">Membrane</keyword>
<keyword id="KW-0479">Metal-binding</keyword>
<keyword id="KW-0812">Transmembrane</keyword>
<keyword id="KW-1133">Transmembrane helix</keyword>
<accession>P80590</accession>
<organism>
    <name type="scientific">Rhodocyclus tenuis</name>
    <name type="common">Rhodospirillum tenue</name>
    <dbReference type="NCBI Taxonomy" id="1066"/>
    <lineage>
        <taxon>Bacteria</taxon>
        <taxon>Pseudomonadati</taxon>
        <taxon>Pseudomonadota</taxon>
        <taxon>Betaproteobacteria</taxon>
        <taxon>Rhodocyclales</taxon>
        <taxon>Rhodocyclaceae</taxon>
        <taxon>Rhodocyclus</taxon>
    </lineage>
</organism>
<proteinExistence type="evidence at protein level"/>
<protein>
    <recommendedName>
        <fullName>Light-harvesting polypeptide B-885 beta-1 chain</fullName>
        <shortName>LH-1</shortName>
    </recommendedName>
    <alternativeName>
        <fullName>Antenna pigment polypeptide beta-1 chain</fullName>
    </alternativeName>
</protein>
<comment type="function">
    <text>Antenna complexes are light-harvesting systems, which transfer the excitation energy to the reaction centers.</text>
</comment>
<comment type="subunit">
    <text>The core complex is formed by different alpha and beta chains, binding bacteriochlorophyll molecules, and arranged most probably in tetrameric structures disposed around the reaction center. The non-pigmented gamma chains may constitute additional components.</text>
</comment>
<comment type="subcellular location">
    <subcellularLocation>
        <location>Cell inner membrane</location>
        <topology>Single-pass type II membrane protein</topology>
    </subcellularLocation>
</comment>
<comment type="similarity">
    <text evidence="2">Belongs to the antenna complex beta subunit family.</text>
</comment>
<dbReference type="PIR" id="S68885">
    <property type="entry name" value="S68885"/>
</dbReference>
<dbReference type="SMR" id="P80590"/>
<dbReference type="GO" id="GO:0005886">
    <property type="term" value="C:plasma membrane"/>
    <property type="evidence" value="ECO:0007669"/>
    <property type="project" value="UniProtKB-SubCell"/>
</dbReference>
<dbReference type="GO" id="GO:0030077">
    <property type="term" value="C:plasma membrane light-harvesting complex"/>
    <property type="evidence" value="ECO:0007669"/>
    <property type="project" value="InterPro"/>
</dbReference>
<dbReference type="GO" id="GO:0042314">
    <property type="term" value="F:bacteriochlorophyll binding"/>
    <property type="evidence" value="ECO:0007669"/>
    <property type="project" value="UniProtKB-KW"/>
</dbReference>
<dbReference type="GO" id="GO:0045156">
    <property type="term" value="F:electron transporter, transferring electrons within the cyclic electron transport pathway of photosynthesis activity"/>
    <property type="evidence" value="ECO:0007669"/>
    <property type="project" value="InterPro"/>
</dbReference>
<dbReference type="GO" id="GO:0046872">
    <property type="term" value="F:metal ion binding"/>
    <property type="evidence" value="ECO:0007669"/>
    <property type="project" value="UniProtKB-KW"/>
</dbReference>
<dbReference type="GO" id="GO:0019684">
    <property type="term" value="P:photosynthesis, light reaction"/>
    <property type="evidence" value="ECO:0007669"/>
    <property type="project" value="InterPro"/>
</dbReference>
<dbReference type="Gene3D" id="1.20.5.250">
    <property type="match status" value="1"/>
</dbReference>
<dbReference type="InterPro" id="IPR000066">
    <property type="entry name" value="Antenna_a/b"/>
</dbReference>
<dbReference type="InterPro" id="IPR023623">
    <property type="entry name" value="Antenna_beta_CS"/>
</dbReference>
<dbReference type="InterPro" id="IPR023624">
    <property type="entry name" value="Antenna_beta_dom_sf"/>
</dbReference>
<dbReference type="InterPro" id="IPR002362">
    <property type="entry name" value="LHB-1/5"/>
</dbReference>
<dbReference type="InterPro" id="IPR035889">
    <property type="entry name" value="Light-harvesting_complex"/>
</dbReference>
<dbReference type="NCBIfam" id="NF040862">
    <property type="entry name" value="pufB_517_ASD"/>
    <property type="match status" value="1"/>
</dbReference>
<dbReference type="Pfam" id="PF00556">
    <property type="entry name" value="LHC"/>
    <property type="match status" value="1"/>
</dbReference>
<dbReference type="PIRSF" id="PIRSF002900">
    <property type="entry name" value="Antenna_beta"/>
    <property type="match status" value="1"/>
</dbReference>
<dbReference type="PRINTS" id="PR00674">
    <property type="entry name" value="LIGHTHARVSTB"/>
</dbReference>
<dbReference type="SUPFAM" id="SSF56918">
    <property type="entry name" value="Light-harvesting complex subunits"/>
    <property type="match status" value="1"/>
</dbReference>
<dbReference type="PROSITE" id="PS00969">
    <property type="entry name" value="ANTENNA_COMP_BETA"/>
    <property type="match status" value="1"/>
</dbReference>
<feature type="chain" id="PRO_0000099839" description="Light-harvesting polypeptide B-885 beta-1 chain">
    <location>
        <begin position="1"/>
        <end position="48"/>
    </location>
</feature>
<feature type="topological domain" description="Cytoplasmic" evidence="1">
    <location>
        <begin position="1"/>
        <end position="20"/>
    </location>
</feature>
<feature type="transmembrane region" description="Helical" evidence="1">
    <location>
        <begin position="21"/>
        <end position="43"/>
    </location>
</feature>
<feature type="topological domain" description="Periplasmic" evidence="1">
    <location>
        <begin position="44"/>
        <end position="48"/>
    </location>
</feature>
<feature type="binding site" description="axial binding residue" evidence="1">
    <location>
        <position position="37"/>
    </location>
    <ligand>
        <name>a bacteriochlorophyll</name>
        <dbReference type="ChEBI" id="CHEBI:38201"/>
    </ligand>
    <ligandPart>
        <name>Mg</name>
        <dbReference type="ChEBI" id="CHEBI:25107"/>
    </ligandPart>
</feature>
<sequence length="48" mass="5344">AEDRKSLSGLTEQEAQEFGTLYTQGVAFVAVIAVVAHALVWAWRPWLQ</sequence>
<reference key="1">
    <citation type="journal article" date="1996" name="Eur. J. Biochem.">
        <title>The antenna complexes of the purple non-sulfur photosynthetic bacterium Rhodocyclus tenuis. Structural and spectral characterization.</title>
        <authorList>
            <person name="Hu Q."/>
            <person name="Brunisholz R.A."/>
            <person name="Frank G."/>
            <person name="Zuber H."/>
        </authorList>
    </citation>
    <scope>PROTEIN SEQUENCE</scope>
    <source>
        <strain>ATCC 25093 / DSM 109 / 2761</strain>
    </source>
</reference>